<sequence>MNVITCRHYEELSEKAASIIAETVKQKPDAVLGLATGGTPEGVYKELVRMHRSEGLSFRNVTTINLDEYAGLSPEDKNSYHYYMNTHFFAHIDSRKDRHFLPDGRADDLDAECGRYDRLIQTLGGADIQLLGIGHNGHIGFNEPGTPFESRTHVVELNEETRQANARYFPSIDQVPVKALTMGIGTILSGKRILIMASGKSKAQAVKQLLDGRISEAFPASALHAHPDVTVLIDEKAAGGD</sequence>
<protein>
    <recommendedName>
        <fullName evidence="1">Glucosamine-6-phosphate deaminase</fullName>
        <ecNumber evidence="1">3.5.99.6</ecNumber>
    </recommendedName>
    <alternativeName>
        <fullName evidence="1">GlcN6P deaminase</fullName>
        <shortName evidence="1">GNPDA</shortName>
    </alternativeName>
    <alternativeName>
        <fullName evidence="1">Glucosamine-6-phosphate isomerase</fullName>
    </alternativeName>
</protein>
<name>NAGB_BACVZ</name>
<feature type="chain" id="PRO_1000066953" description="Glucosamine-6-phosphate deaminase">
    <location>
        <begin position="1"/>
        <end position="241"/>
    </location>
</feature>
<feature type="active site" description="Proton acceptor; for enolization step" evidence="1">
    <location>
        <position position="67"/>
    </location>
</feature>
<feature type="active site" description="For ring-opening step" evidence="1">
    <location>
        <position position="136"/>
    </location>
</feature>
<feature type="active site" description="Proton acceptor; for ring-opening step" evidence="1">
    <location>
        <position position="138"/>
    </location>
</feature>
<feature type="active site" description="For ring-opening step" evidence="1">
    <location>
        <position position="143"/>
    </location>
</feature>
<comment type="function">
    <text evidence="1">Catalyzes the reversible isomerization-deamination of glucosamine 6-phosphate (GlcN6P) to form fructose 6-phosphate (Fru6P) and ammonium ion.</text>
</comment>
<comment type="catalytic activity">
    <reaction evidence="1">
        <text>alpha-D-glucosamine 6-phosphate + H2O = beta-D-fructose 6-phosphate + NH4(+)</text>
        <dbReference type="Rhea" id="RHEA:12172"/>
        <dbReference type="ChEBI" id="CHEBI:15377"/>
        <dbReference type="ChEBI" id="CHEBI:28938"/>
        <dbReference type="ChEBI" id="CHEBI:57634"/>
        <dbReference type="ChEBI" id="CHEBI:75989"/>
        <dbReference type="EC" id="3.5.99.6"/>
    </reaction>
</comment>
<comment type="pathway">
    <text evidence="1">Amino-sugar metabolism; N-acetylneuraminate degradation; D-fructose 6-phosphate from N-acetylneuraminate: step 5/5.</text>
</comment>
<comment type="similarity">
    <text evidence="1">Belongs to the glucosamine/galactosamine-6-phosphate isomerase family. NagB subfamily.</text>
</comment>
<gene>
    <name evidence="1" type="primary">nagB</name>
    <name type="ordered locus">RBAM_032210</name>
</gene>
<organism>
    <name type="scientific">Bacillus velezensis (strain DSM 23117 / BGSC 10A6 / LMG 26770 / FZB42)</name>
    <name type="common">Bacillus amyloliquefaciens subsp. plantarum</name>
    <dbReference type="NCBI Taxonomy" id="326423"/>
    <lineage>
        <taxon>Bacteria</taxon>
        <taxon>Bacillati</taxon>
        <taxon>Bacillota</taxon>
        <taxon>Bacilli</taxon>
        <taxon>Bacillales</taxon>
        <taxon>Bacillaceae</taxon>
        <taxon>Bacillus</taxon>
        <taxon>Bacillus amyloliquefaciens group</taxon>
    </lineage>
</organism>
<proteinExistence type="inferred from homology"/>
<keyword id="KW-0119">Carbohydrate metabolism</keyword>
<keyword id="KW-0378">Hydrolase</keyword>
<reference key="1">
    <citation type="journal article" date="2007" name="Nat. Biotechnol.">
        <title>Comparative analysis of the complete genome sequence of the plant growth-promoting bacterium Bacillus amyloliquefaciens FZB42.</title>
        <authorList>
            <person name="Chen X.H."/>
            <person name="Koumoutsi A."/>
            <person name="Scholz R."/>
            <person name="Eisenreich A."/>
            <person name="Schneider K."/>
            <person name="Heinemeyer I."/>
            <person name="Morgenstern B."/>
            <person name="Voss B."/>
            <person name="Hess W.R."/>
            <person name="Reva O."/>
            <person name="Junge H."/>
            <person name="Voigt B."/>
            <person name="Jungblut P.R."/>
            <person name="Vater J."/>
            <person name="Suessmuth R."/>
            <person name="Liesegang H."/>
            <person name="Strittmatter A."/>
            <person name="Gottschalk G."/>
            <person name="Borriss R."/>
        </authorList>
    </citation>
    <scope>NUCLEOTIDE SEQUENCE [LARGE SCALE GENOMIC DNA]</scope>
    <source>
        <strain>DSM 23117 / BGSC 10A6 / LMG 26770 / FZB42</strain>
    </source>
</reference>
<dbReference type="EC" id="3.5.99.6" evidence="1"/>
<dbReference type="EMBL" id="CP000560">
    <property type="protein sequence ID" value="ABS75551.1"/>
    <property type="molecule type" value="Genomic_DNA"/>
</dbReference>
<dbReference type="RefSeq" id="WP_012118553.1">
    <property type="nucleotide sequence ID" value="NC_009725.2"/>
</dbReference>
<dbReference type="SMR" id="A7Z975"/>
<dbReference type="GeneID" id="93082366"/>
<dbReference type="KEGG" id="bay:RBAM_032210"/>
<dbReference type="HOGENOM" id="CLU_049611_1_1_9"/>
<dbReference type="UniPathway" id="UPA00629">
    <property type="reaction ID" value="UER00684"/>
</dbReference>
<dbReference type="Proteomes" id="UP000001120">
    <property type="component" value="Chromosome"/>
</dbReference>
<dbReference type="GO" id="GO:0005737">
    <property type="term" value="C:cytoplasm"/>
    <property type="evidence" value="ECO:0007669"/>
    <property type="project" value="TreeGrafter"/>
</dbReference>
<dbReference type="GO" id="GO:0004342">
    <property type="term" value="F:glucosamine-6-phosphate deaminase activity"/>
    <property type="evidence" value="ECO:0007669"/>
    <property type="project" value="UniProtKB-UniRule"/>
</dbReference>
<dbReference type="GO" id="GO:0042802">
    <property type="term" value="F:identical protein binding"/>
    <property type="evidence" value="ECO:0007669"/>
    <property type="project" value="TreeGrafter"/>
</dbReference>
<dbReference type="GO" id="GO:0005975">
    <property type="term" value="P:carbohydrate metabolic process"/>
    <property type="evidence" value="ECO:0007669"/>
    <property type="project" value="InterPro"/>
</dbReference>
<dbReference type="GO" id="GO:0006043">
    <property type="term" value="P:glucosamine catabolic process"/>
    <property type="evidence" value="ECO:0007669"/>
    <property type="project" value="TreeGrafter"/>
</dbReference>
<dbReference type="GO" id="GO:0006046">
    <property type="term" value="P:N-acetylglucosamine catabolic process"/>
    <property type="evidence" value="ECO:0007669"/>
    <property type="project" value="TreeGrafter"/>
</dbReference>
<dbReference type="GO" id="GO:0019262">
    <property type="term" value="P:N-acetylneuraminate catabolic process"/>
    <property type="evidence" value="ECO:0007669"/>
    <property type="project" value="UniProtKB-UniRule"/>
</dbReference>
<dbReference type="CDD" id="cd01399">
    <property type="entry name" value="GlcN6P_deaminase"/>
    <property type="match status" value="1"/>
</dbReference>
<dbReference type="FunFam" id="3.40.50.1360:FF:000003">
    <property type="entry name" value="Glucosamine-6-phosphate deaminase"/>
    <property type="match status" value="1"/>
</dbReference>
<dbReference type="Gene3D" id="3.40.50.1360">
    <property type="match status" value="1"/>
</dbReference>
<dbReference type="HAMAP" id="MF_01241">
    <property type="entry name" value="GlcN6P_deamin"/>
    <property type="match status" value="1"/>
</dbReference>
<dbReference type="InterPro" id="IPR006148">
    <property type="entry name" value="Glc/Gal-6P_isomerase"/>
</dbReference>
<dbReference type="InterPro" id="IPR004547">
    <property type="entry name" value="Glucosamine6P_isomerase"/>
</dbReference>
<dbReference type="InterPro" id="IPR037171">
    <property type="entry name" value="NagB/RpiA_transferase-like"/>
</dbReference>
<dbReference type="NCBIfam" id="TIGR00502">
    <property type="entry name" value="nagB"/>
    <property type="match status" value="1"/>
</dbReference>
<dbReference type="PANTHER" id="PTHR11280">
    <property type="entry name" value="GLUCOSAMINE-6-PHOSPHATE ISOMERASE"/>
    <property type="match status" value="1"/>
</dbReference>
<dbReference type="PANTHER" id="PTHR11280:SF5">
    <property type="entry name" value="GLUCOSAMINE-6-PHOSPHATE ISOMERASE"/>
    <property type="match status" value="1"/>
</dbReference>
<dbReference type="Pfam" id="PF01182">
    <property type="entry name" value="Glucosamine_iso"/>
    <property type="match status" value="1"/>
</dbReference>
<dbReference type="SUPFAM" id="SSF100950">
    <property type="entry name" value="NagB/RpiA/CoA transferase-like"/>
    <property type="match status" value="1"/>
</dbReference>
<accession>A7Z975</accession>
<evidence type="ECO:0000255" key="1">
    <source>
        <dbReference type="HAMAP-Rule" id="MF_01241"/>
    </source>
</evidence>